<keyword id="KW-0012">Acyltransferase</keyword>
<keyword id="KW-1185">Reference proteome</keyword>
<keyword id="KW-0808">Transferase</keyword>
<reference key="1">
    <citation type="journal article" date="2003" name="PLoS Biol.">
        <title>The genome sequence of Caenorhabditis briggsae: a platform for comparative genomics.</title>
        <authorList>
            <person name="Stein L.D."/>
            <person name="Bao Z."/>
            <person name="Blasiar D."/>
            <person name="Blumenthal T."/>
            <person name="Brent M.R."/>
            <person name="Chen N."/>
            <person name="Chinwalla A."/>
            <person name="Clarke L."/>
            <person name="Clee C."/>
            <person name="Coghlan A."/>
            <person name="Coulson A."/>
            <person name="D'Eustachio P."/>
            <person name="Fitch D.H.A."/>
            <person name="Fulton L.A."/>
            <person name="Fulton R.E."/>
            <person name="Griffiths-Jones S."/>
            <person name="Harris T.W."/>
            <person name="Hillier L.W."/>
            <person name="Kamath R."/>
            <person name="Kuwabara P.E."/>
            <person name="Mardis E.R."/>
            <person name="Marra M.A."/>
            <person name="Miner T.L."/>
            <person name="Minx P."/>
            <person name="Mullikin J.C."/>
            <person name="Plumb R.W."/>
            <person name="Rogers J."/>
            <person name="Schein J.E."/>
            <person name="Sohrmann M."/>
            <person name="Spieth J."/>
            <person name="Stajich J.E."/>
            <person name="Wei C."/>
            <person name="Willey D."/>
            <person name="Wilson R.K."/>
            <person name="Durbin R.M."/>
            <person name="Waterston R.H."/>
        </authorList>
    </citation>
    <scope>NUCLEOTIDE SEQUENCE [LARGE SCALE GENOMIC DNA]</scope>
    <source>
        <strain>AF16</strain>
    </source>
</reference>
<comment type="similarity">
    <text evidence="2">Belongs to the acetyltransferase family. GNAT subfamily.</text>
</comment>
<organism>
    <name type="scientific">Caenorhabditis briggsae</name>
    <dbReference type="NCBI Taxonomy" id="6238"/>
    <lineage>
        <taxon>Eukaryota</taxon>
        <taxon>Metazoa</taxon>
        <taxon>Ecdysozoa</taxon>
        <taxon>Nematoda</taxon>
        <taxon>Chromadorea</taxon>
        <taxon>Rhabditida</taxon>
        <taxon>Rhabditina</taxon>
        <taxon>Rhabditomorpha</taxon>
        <taxon>Rhabditoidea</taxon>
        <taxon>Rhabditidae</taxon>
        <taxon>Peloderinae</taxon>
        <taxon>Caenorhabditis</taxon>
    </lineage>
</organism>
<proteinExistence type="inferred from homology"/>
<protein>
    <recommendedName>
        <fullName>N-acetyltransferase 9-like protein</fullName>
        <ecNumber>2.3.1.-</ecNumber>
    </recommendedName>
</protein>
<sequence>MKLNENVKIVAEKCVLVPYEPCHVEKYHKWMEDEEIRRLTGSERLSLEEEFEMQKSWREDDDKLTFIVLSREEGEETNRMLGDVNLFISKSENLEEEEDVGEVEVMIAEPRGRGKGIGQEAVSLIISWAFKNLQIARFCVKITEDNAPSLSLFEKKLGFKRVSYSSAFKEITMELPGERLESHFGRFLGENSQILEHK</sequence>
<gene>
    <name type="ORF">CBG11716</name>
</gene>
<dbReference type="EC" id="2.3.1.-"/>
<dbReference type="EMBL" id="HE601289">
    <property type="protein sequence ID" value="CAP30860.1"/>
    <property type="molecule type" value="Genomic_DNA"/>
</dbReference>
<dbReference type="RefSeq" id="XP_002640970.1">
    <property type="nucleotide sequence ID" value="XM_002640924.1"/>
</dbReference>
<dbReference type="SMR" id="Q61FA3"/>
<dbReference type="FunCoup" id="Q61FA3">
    <property type="interactions" value="2203"/>
</dbReference>
<dbReference type="STRING" id="6238.Q61FA3"/>
<dbReference type="EnsemblMetazoa" id="CBG11716.1">
    <property type="protein sequence ID" value="CBG11716.1"/>
    <property type="gene ID" value="WBGene00032796"/>
</dbReference>
<dbReference type="GeneID" id="8582964"/>
<dbReference type="KEGG" id="cbr:CBG_11716"/>
<dbReference type="CTD" id="8582964"/>
<dbReference type="WormBase" id="CBG11716">
    <property type="protein sequence ID" value="CBP17256"/>
    <property type="gene ID" value="WBGene00032796"/>
</dbReference>
<dbReference type="eggNOG" id="KOG4135">
    <property type="taxonomic scope" value="Eukaryota"/>
</dbReference>
<dbReference type="HOGENOM" id="CLU_073102_0_0_1"/>
<dbReference type="InParanoid" id="Q61FA3"/>
<dbReference type="OMA" id="WHVPRYH"/>
<dbReference type="Proteomes" id="UP000008549">
    <property type="component" value="Unassembled WGS sequence"/>
</dbReference>
<dbReference type="GO" id="GO:0008080">
    <property type="term" value="F:N-acetyltransferase activity"/>
    <property type="evidence" value="ECO:0007669"/>
    <property type="project" value="InterPro"/>
</dbReference>
<dbReference type="FunFam" id="3.40.630.30:FF:000132">
    <property type="entry name" value="N-acetyltransferase 9-like protein"/>
    <property type="match status" value="1"/>
</dbReference>
<dbReference type="Gene3D" id="3.40.630.30">
    <property type="match status" value="1"/>
</dbReference>
<dbReference type="InterPro" id="IPR016181">
    <property type="entry name" value="Acyl_CoA_acyltransferase"/>
</dbReference>
<dbReference type="InterPro" id="IPR000182">
    <property type="entry name" value="GNAT_dom"/>
</dbReference>
<dbReference type="InterPro" id="IPR039135">
    <property type="entry name" value="NAT9-like"/>
</dbReference>
<dbReference type="PANTHER" id="PTHR13256:SF16">
    <property type="entry name" value="ALPHA_BETA-TUBULIN-N-ACETYLTRANSFERASE 9"/>
    <property type="match status" value="1"/>
</dbReference>
<dbReference type="PANTHER" id="PTHR13256">
    <property type="entry name" value="N-ACETYLTRANSFERASE 9"/>
    <property type="match status" value="1"/>
</dbReference>
<dbReference type="Pfam" id="PF13302">
    <property type="entry name" value="Acetyltransf_3"/>
    <property type="match status" value="1"/>
</dbReference>
<dbReference type="SUPFAM" id="SSF55729">
    <property type="entry name" value="Acyl-CoA N-acyltransferases (Nat)"/>
    <property type="match status" value="1"/>
</dbReference>
<dbReference type="PROSITE" id="PS51186">
    <property type="entry name" value="GNAT"/>
    <property type="match status" value="1"/>
</dbReference>
<evidence type="ECO:0000255" key="1">
    <source>
        <dbReference type="PROSITE-ProRule" id="PRU00532"/>
    </source>
</evidence>
<evidence type="ECO:0000305" key="2"/>
<name>NAT9_CAEBR</name>
<feature type="chain" id="PRO_0000286877" description="N-acetyltransferase 9-like protein">
    <location>
        <begin position="1"/>
        <end position="198"/>
    </location>
</feature>
<feature type="domain" description="N-acetyltransferase" evidence="1">
    <location>
        <begin position="34"/>
        <end position="178"/>
    </location>
</feature>
<accession>Q61FA3</accession>
<accession>A8XDW5</accession>